<name>SYT1_BACSU</name>
<dbReference type="EC" id="6.1.1.3" evidence="1"/>
<dbReference type="EMBL" id="M36594">
    <property type="protein sequence ID" value="AAA22864.1"/>
    <property type="molecule type" value="Genomic_DNA"/>
</dbReference>
<dbReference type="EMBL" id="Z75208">
    <property type="protein sequence ID" value="CAA99608.1"/>
    <property type="molecule type" value="Genomic_DNA"/>
</dbReference>
<dbReference type="EMBL" id="AF008220">
    <property type="protein sequence ID" value="AAC00362.1"/>
    <property type="molecule type" value="Genomic_DNA"/>
</dbReference>
<dbReference type="EMBL" id="AL009126">
    <property type="protein sequence ID" value="CAB14855.1"/>
    <property type="molecule type" value="Genomic_DNA"/>
</dbReference>
<dbReference type="EMBL" id="X04963">
    <property type="protein sequence ID" value="CAA28636.1"/>
    <property type="molecule type" value="Genomic_DNA"/>
</dbReference>
<dbReference type="PIR" id="B37770">
    <property type="entry name" value="YSBST1"/>
</dbReference>
<dbReference type="RefSeq" id="NP_390773.1">
    <property type="nucleotide sequence ID" value="NC_000964.3"/>
</dbReference>
<dbReference type="RefSeq" id="WP_003229473.1">
    <property type="nucleotide sequence ID" value="NZ_OZ025638.1"/>
</dbReference>
<dbReference type="SMR" id="P18255"/>
<dbReference type="FunCoup" id="P18255">
    <property type="interactions" value="769"/>
</dbReference>
<dbReference type="IntAct" id="P18255">
    <property type="interactions" value="1"/>
</dbReference>
<dbReference type="MINT" id="P18255"/>
<dbReference type="STRING" id="224308.BSU28950"/>
<dbReference type="jPOST" id="P18255"/>
<dbReference type="PaxDb" id="224308-BSU28950"/>
<dbReference type="EnsemblBacteria" id="CAB14855">
    <property type="protein sequence ID" value="CAB14855"/>
    <property type="gene ID" value="BSU_28950"/>
</dbReference>
<dbReference type="GeneID" id="937410"/>
<dbReference type="KEGG" id="bsu:BSU28950"/>
<dbReference type="PATRIC" id="fig|224308.179.peg.3143"/>
<dbReference type="eggNOG" id="COG0441">
    <property type="taxonomic scope" value="Bacteria"/>
</dbReference>
<dbReference type="InParanoid" id="P18255"/>
<dbReference type="OrthoDB" id="9802304at2"/>
<dbReference type="PhylomeDB" id="P18255"/>
<dbReference type="BioCyc" id="BSUB:BSU28950-MONOMER"/>
<dbReference type="Proteomes" id="UP000001570">
    <property type="component" value="Chromosome"/>
</dbReference>
<dbReference type="GO" id="GO:0005737">
    <property type="term" value="C:cytoplasm"/>
    <property type="evidence" value="ECO:0007669"/>
    <property type="project" value="UniProtKB-SubCell"/>
</dbReference>
<dbReference type="GO" id="GO:0005524">
    <property type="term" value="F:ATP binding"/>
    <property type="evidence" value="ECO:0007669"/>
    <property type="project" value="UniProtKB-UniRule"/>
</dbReference>
<dbReference type="GO" id="GO:0140096">
    <property type="term" value="F:catalytic activity, acting on a protein"/>
    <property type="evidence" value="ECO:0007669"/>
    <property type="project" value="UniProtKB-ARBA"/>
</dbReference>
<dbReference type="GO" id="GO:0046872">
    <property type="term" value="F:metal ion binding"/>
    <property type="evidence" value="ECO:0007669"/>
    <property type="project" value="UniProtKB-KW"/>
</dbReference>
<dbReference type="GO" id="GO:0004829">
    <property type="term" value="F:threonine-tRNA ligase activity"/>
    <property type="evidence" value="ECO:0000318"/>
    <property type="project" value="GO_Central"/>
</dbReference>
<dbReference type="GO" id="GO:0016740">
    <property type="term" value="F:transferase activity"/>
    <property type="evidence" value="ECO:0007669"/>
    <property type="project" value="UniProtKB-ARBA"/>
</dbReference>
<dbReference type="GO" id="GO:0000049">
    <property type="term" value="F:tRNA binding"/>
    <property type="evidence" value="ECO:0007669"/>
    <property type="project" value="UniProtKB-KW"/>
</dbReference>
<dbReference type="GO" id="GO:0006435">
    <property type="term" value="P:threonyl-tRNA aminoacylation"/>
    <property type="evidence" value="ECO:0000318"/>
    <property type="project" value="GO_Central"/>
</dbReference>
<dbReference type="CDD" id="cd01667">
    <property type="entry name" value="TGS_ThrRS"/>
    <property type="match status" value="1"/>
</dbReference>
<dbReference type="CDD" id="cd00860">
    <property type="entry name" value="ThrRS_anticodon"/>
    <property type="match status" value="1"/>
</dbReference>
<dbReference type="CDD" id="cd00771">
    <property type="entry name" value="ThrRS_core"/>
    <property type="match status" value="1"/>
</dbReference>
<dbReference type="FunFam" id="3.10.20.30:FF:000005">
    <property type="entry name" value="Threonine--tRNA ligase"/>
    <property type="match status" value="1"/>
</dbReference>
<dbReference type="FunFam" id="3.30.54.20:FF:000002">
    <property type="entry name" value="Threonine--tRNA ligase"/>
    <property type="match status" value="1"/>
</dbReference>
<dbReference type="FunFam" id="3.30.930.10:FF:000002">
    <property type="entry name" value="Threonine--tRNA ligase"/>
    <property type="match status" value="1"/>
</dbReference>
<dbReference type="FunFam" id="3.40.50.800:FF:000001">
    <property type="entry name" value="Threonine--tRNA ligase"/>
    <property type="match status" value="1"/>
</dbReference>
<dbReference type="FunFam" id="3.30.980.10:FF:000005">
    <property type="entry name" value="Threonyl-tRNA synthetase, mitochondrial"/>
    <property type="match status" value="1"/>
</dbReference>
<dbReference type="Gene3D" id="3.10.20.30">
    <property type="match status" value="1"/>
</dbReference>
<dbReference type="Gene3D" id="3.30.54.20">
    <property type="match status" value="1"/>
</dbReference>
<dbReference type="Gene3D" id="3.40.50.800">
    <property type="entry name" value="Anticodon-binding domain"/>
    <property type="match status" value="1"/>
</dbReference>
<dbReference type="Gene3D" id="3.30.930.10">
    <property type="entry name" value="Bira Bifunctional Protein, Domain 2"/>
    <property type="match status" value="1"/>
</dbReference>
<dbReference type="Gene3D" id="3.30.980.10">
    <property type="entry name" value="Threonyl-trna Synthetase, Chain A, domain 2"/>
    <property type="match status" value="1"/>
</dbReference>
<dbReference type="HAMAP" id="MF_00184">
    <property type="entry name" value="Thr_tRNA_synth"/>
    <property type="match status" value="1"/>
</dbReference>
<dbReference type="InterPro" id="IPR002314">
    <property type="entry name" value="aa-tRNA-synt_IIb"/>
</dbReference>
<dbReference type="InterPro" id="IPR006195">
    <property type="entry name" value="aa-tRNA-synth_II"/>
</dbReference>
<dbReference type="InterPro" id="IPR045864">
    <property type="entry name" value="aa-tRNA-synth_II/BPL/LPL"/>
</dbReference>
<dbReference type="InterPro" id="IPR004154">
    <property type="entry name" value="Anticodon-bd"/>
</dbReference>
<dbReference type="InterPro" id="IPR036621">
    <property type="entry name" value="Anticodon-bd_dom_sf"/>
</dbReference>
<dbReference type="InterPro" id="IPR012675">
    <property type="entry name" value="Beta-grasp_dom_sf"/>
</dbReference>
<dbReference type="InterPro" id="IPR004095">
    <property type="entry name" value="TGS"/>
</dbReference>
<dbReference type="InterPro" id="IPR012676">
    <property type="entry name" value="TGS-like"/>
</dbReference>
<dbReference type="InterPro" id="IPR002320">
    <property type="entry name" value="Thr-tRNA-ligase_IIa"/>
</dbReference>
<dbReference type="InterPro" id="IPR018163">
    <property type="entry name" value="Thr/Ala-tRNA-synth_IIc_edit"/>
</dbReference>
<dbReference type="InterPro" id="IPR047246">
    <property type="entry name" value="ThrRS_anticodon"/>
</dbReference>
<dbReference type="InterPro" id="IPR033728">
    <property type="entry name" value="ThrRS_core"/>
</dbReference>
<dbReference type="InterPro" id="IPR012947">
    <property type="entry name" value="tRNA_SAD"/>
</dbReference>
<dbReference type="NCBIfam" id="TIGR00418">
    <property type="entry name" value="thrS"/>
    <property type="match status" value="1"/>
</dbReference>
<dbReference type="PANTHER" id="PTHR11451:SF56">
    <property type="entry name" value="THREONINE--TRNA LIGASE 1"/>
    <property type="match status" value="1"/>
</dbReference>
<dbReference type="PANTHER" id="PTHR11451">
    <property type="entry name" value="THREONINE-TRNA LIGASE"/>
    <property type="match status" value="1"/>
</dbReference>
<dbReference type="Pfam" id="PF03129">
    <property type="entry name" value="HGTP_anticodon"/>
    <property type="match status" value="1"/>
</dbReference>
<dbReference type="Pfam" id="PF02824">
    <property type="entry name" value="TGS"/>
    <property type="match status" value="1"/>
</dbReference>
<dbReference type="Pfam" id="PF00587">
    <property type="entry name" value="tRNA-synt_2b"/>
    <property type="match status" value="1"/>
</dbReference>
<dbReference type="Pfam" id="PF07973">
    <property type="entry name" value="tRNA_SAD"/>
    <property type="match status" value="1"/>
</dbReference>
<dbReference type="PRINTS" id="PR01047">
    <property type="entry name" value="TRNASYNTHTHR"/>
</dbReference>
<dbReference type="SMART" id="SM00863">
    <property type="entry name" value="tRNA_SAD"/>
    <property type="match status" value="1"/>
</dbReference>
<dbReference type="SUPFAM" id="SSF52954">
    <property type="entry name" value="Class II aaRS ABD-related"/>
    <property type="match status" value="1"/>
</dbReference>
<dbReference type="SUPFAM" id="SSF55681">
    <property type="entry name" value="Class II aaRS and biotin synthetases"/>
    <property type="match status" value="1"/>
</dbReference>
<dbReference type="SUPFAM" id="SSF81271">
    <property type="entry name" value="TGS-like"/>
    <property type="match status" value="1"/>
</dbReference>
<dbReference type="SUPFAM" id="SSF55186">
    <property type="entry name" value="ThrRS/AlaRS common domain"/>
    <property type="match status" value="1"/>
</dbReference>
<dbReference type="PROSITE" id="PS50862">
    <property type="entry name" value="AA_TRNA_LIGASE_II"/>
    <property type="match status" value="1"/>
</dbReference>
<dbReference type="PROSITE" id="PS51880">
    <property type="entry name" value="TGS"/>
    <property type="match status" value="1"/>
</dbReference>
<organism>
    <name type="scientific">Bacillus subtilis (strain 168)</name>
    <dbReference type="NCBI Taxonomy" id="224308"/>
    <lineage>
        <taxon>Bacteria</taxon>
        <taxon>Bacillati</taxon>
        <taxon>Bacillota</taxon>
        <taxon>Bacilli</taxon>
        <taxon>Bacillales</taxon>
        <taxon>Bacillaceae</taxon>
        <taxon>Bacillus</taxon>
    </lineage>
</organism>
<comment type="function">
    <text evidence="1">Catalyzes the attachment of threonine to tRNA(Thr) in a two-step reaction: L-threonine is first activated by ATP to form Thr-AMP and then transferred to the acceptor end of tRNA(Thr). Also edits incorrectly charged L-seryl-tRNA(Thr).</text>
</comment>
<comment type="catalytic activity">
    <reaction evidence="1">
        <text>tRNA(Thr) + L-threonine + ATP = L-threonyl-tRNA(Thr) + AMP + diphosphate + H(+)</text>
        <dbReference type="Rhea" id="RHEA:24624"/>
        <dbReference type="Rhea" id="RHEA-COMP:9670"/>
        <dbReference type="Rhea" id="RHEA-COMP:9704"/>
        <dbReference type="ChEBI" id="CHEBI:15378"/>
        <dbReference type="ChEBI" id="CHEBI:30616"/>
        <dbReference type="ChEBI" id="CHEBI:33019"/>
        <dbReference type="ChEBI" id="CHEBI:57926"/>
        <dbReference type="ChEBI" id="CHEBI:78442"/>
        <dbReference type="ChEBI" id="CHEBI:78534"/>
        <dbReference type="ChEBI" id="CHEBI:456215"/>
        <dbReference type="EC" id="6.1.1.3"/>
    </reaction>
</comment>
<comment type="cofactor">
    <cofactor evidence="1">
        <name>Zn(2+)</name>
        <dbReference type="ChEBI" id="CHEBI:29105"/>
    </cofactor>
    <text evidence="1">Binds 1 zinc ion per subunit.</text>
</comment>
<comment type="subunit">
    <text evidence="1">Homodimer.</text>
</comment>
<comment type="subcellular location">
    <subcellularLocation>
        <location evidence="1">Cytoplasm</location>
    </subcellularLocation>
</comment>
<comment type="developmental stage">
    <text evidence="3">Expressed during vegetative growth.</text>
</comment>
<comment type="similarity">
    <text evidence="1">Belongs to the class-II aminoacyl-tRNA synthetase family.</text>
</comment>
<proteinExistence type="evidence at transcript level"/>
<keyword id="KW-0030">Aminoacyl-tRNA synthetase</keyword>
<keyword id="KW-0067">ATP-binding</keyword>
<keyword id="KW-0963">Cytoplasm</keyword>
<keyword id="KW-0436">Ligase</keyword>
<keyword id="KW-0479">Metal-binding</keyword>
<keyword id="KW-0547">Nucleotide-binding</keyword>
<keyword id="KW-0648">Protein biosynthesis</keyword>
<keyword id="KW-1185">Reference proteome</keyword>
<keyword id="KW-0694">RNA-binding</keyword>
<keyword id="KW-0820">tRNA-binding</keyword>
<keyword id="KW-0862">Zinc</keyword>
<evidence type="ECO:0000255" key="1">
    <source>
        <dbReference type="HAMAP-Rule" id="MF_00184"/>
    </source>
</evidence>
<evidence type="ECO:0000255" key="2">
    <source>
        <dbReference type="PROSITE-ProRule" id="PRU01228"/>
    </source>
</evidence>
<evidence type="ECO:0000269" key="3">
    <source>
    </source>
</evidence>
<accession>P18255</accession>
<accession>P06570</accession>
<gene>
    <name type="primary">thrS</name>
    <name type="synonym">thrSV</name>
    <name type="ordered locus">BSU28950</name>
</gene>
<reference key="1">
    <citation type="journal article" date="1990" name="J. Bacteriol.">
        <title>Independent genes for two threonyl-tRNA synthetases in Bacillus subtilis.</title>
        <authorList>
            <person name="Putzer H."/>
            <person name="Brakhage A."/>
            <person name="Grunberg-Manago M."/>
        </authorList>
    </citation>
    <scope>NUCLEOTIDE SEQUENCE [GENOMIC DNA]</scope>
</reference>
<reference key="2">
    <citation type="journal article" date="1996" name="Microbiology">
        <title>The dnaB-pheA (256 degrees-240 degrees) region of the Bacillus subtilis chromosome containing genes responsible for stress responses, the utilization of plant cell walls and primary metabolism.</title>
        <authorList>
            <person name="Wipat A."/>
            <person name="Carter N."/>
            <person name="Brignell C.S."/>
            <person name="Guy J.B."/>
            <person name="Piper K."/>
            <person name="Sanders J."/>
            <person name="Emmerson P.T."/>
            <person name="Harwood C.R."/>
        </authorList>
    </citation>
    <scope>NUCLEOTIDE SEQUENCE [GENOMIC DNA]</scope>
    <source>
        <strain>168</strain>
    </source>
</reference>
<reference key="3">
    <citation type="journal article" date="1997" name="Microbiology">
        <title>Sequencing and functional annotation of the Bacillus subtilis genes in the 200 kb rrnB-dnaB region.</title>
        <authorList>
            <person name="Lapidus A."/>
            <person name="Galleron N."/>
            <person name="Sorokin A."/>
            <person name="Ehrlich S.D."/>
        </authorList>
    </citation>
    <scope>NUCLEOTIDE SEQUENCE [GENOMIC DNA]</scope>
    <source>
        <strain>168</strain>
    </source>
</reference>
<reference key="4">
    <citation type="journal article" date="1997" name="Nature">
        <title>The complete genome sequence of the Gram-positive bacterium Bacillus subtilis.</title>
        <authorList>
            <person name="Kunst F."/>
            <person name="Ogasawara N."/>
            <person name="Moszer I."/>
            <person name="Albertini A.M."/>
            <person name="Alloni G."/>
            <person name="Azevedo V."/>
            <person name="Bertero M.G."/>
            <person name="Bessieres P."/>
            <person name="Bolotin A."/>
            <person name="Borchert S."/>
            <person name="Borriss R."/>
            <person name="Boursier L."/>
            <person name="Brans A."/>
            <person name="Braun M."/>
            <person name="Brignell S.C."/>
            <person name="Bron S."/>
            <person name="Brouillet S."/>
            <person name="Bruschi C.V."/>
            <person name="Caldwell B."/>
            <person name="Capuano V."/>
            <person name="Carter N.M."/>
            <person name="Choi S.-K."/>
            <person name="Codani J.-J."/>
            <person name="Connerton I.F."/>
            <person name="Cummings N.J."/>
            <person name="Daniel R.A."/>
            <person name="Denizot F."/>
            <person name="Devine K.M."/>
            <person name="Duesterhoeft A."/>
            <person name="Ehrlich S.D."/>
            <person name="Emmerson P.T."/>
            <person name="Entian K.-D."/>
            <person name="Errington J."/>
            <person name="Fabret C."/>
            <person name="Ferrari E."/>
            <person name="Foulger D."/>
            <person name="Fritz C."/>
            <person name="Fujita M."/>
            <person name="Fujita Y."/>
            <person name="Fuma S."/>
            <person name="Galizzi A."/>
            <person name="Galleron N."/>
            <person name="Ghim S.-Y."/>
            <person name="Glaser P."/>
            <person name="Goffeau A."/>
            <person name="Golightly E.J."/>
            <person name="Grandi G."/>
            <person name="Guiseppi G."/>
            <person name="Guy B.J."/>
            <person name="Haga K."/>
            <person name="Haiech J."/>
            <person name="Harwood C.R."/>
            <person name="Henaut A."/>
            <person name="Hilbert H."/>
            <person name="Holsappel S."/>
            <person name="Hosono S."/>
            <person name="Hullo M.-F."/>
            <person name="Itaya M."/>
            <person name="Jones L.-M."/>
            <person name="Joris B."/>
            <person name="Karamata D."/>
            <person name="Kasahara Y."/>
            <person name="Klaerr-Blanchard M."/>
            <person name="Klein C."/>
            <person name="Kobayashi Y."/>
            <person name="Koetter P."/>
            <person name="Koningstein G."/>
            <person name="Krogh S."/>
            <person name="Kumano M."/>
            <person name="Kurita K."/>
            <person name="Lapidus A."/>
            <person name="Lardinois S."/>
            <person name="Lauber J."/>
            <person name="Lazarevic V."/>
            <person name="Lee S.-M."/>
            <person name="Levine A."/>
            <person name="Liu H."/>
            <person name="Masuda S."/>
            <person name="Mauel C."/>
            <person name="Medigue C."/>
            <person name="Medina N."/>
            <person name="Mellado R.P."/>
            <person name="Mizuno M."/>
            <person name="Moestl D."/>
            <person name="Nakai S."/>
            <person name="Noback M."/>
            <person name="Noone D."/>
            <person name="O'Reilly M."/>
            <person name="Ogawa K."/>
            <person name="Ogiwara A."/>
            <person name="Oudega B."/>
            <person name="Park S.-H."/>
            <person name="Parro V."/>
            <person name="Pohl T.M."/>
            <person name="Portetelle D."/>
            <person name="Porwollik S."/>
            <person name="Prescott A.M."/>
            <person name="Presecan E."/>
            <person name="Pujic P."/>
            <person name="Purnelle B."/>
            <person name="Rapoport G."/>
            <person name="Rey M."/>
            <person name="Reynolds S."/>
            <person name="Rieger M."/>
            <person name="Rivolta C."/>
            <person name="Rocha E."/>
            <person name="Roche B."/>
            <person name="Rose M."/>
            <person name="Sadaie Y."/>
            <person name="Sato T."/>
            <person name="Scanlan E."/>
            <person name="Schleich S."/>
            <person name="Schroeter R."/>
            <person name="Scoffone F."/>
            <person name="Sekiguchi J."/>
            <person name="Sekowska A."/>
            <person name="Seror S.J."/>
            <person name="Serror P."/>
            <person name="Shin B.-S."/>
            <person name="Soldo B."/>
            <person name="Sorokin A."/>
            <person name="Tacconi E."/>
            <person name="Takagi T."/>
            <person name="Takahashi H."/>
            <person name="Takemaru K."/>
            <person name="Takeuchi M."/>
            <person name="Tamakoshi A."/>
            <person name="Tanaka T."/>
            <person name="Terpstra P."/>
            <person name="Tognoni A."/>
            <person name="Tosato V."/>
            <person name="Uchiyama S."/>
            <person name="Vandenbol M."/>
            <person name="Vannier F."/>
            <person name="Vassarotti A."/>
            <person name="Viari A."/>
            <person name="Wambutt R."/>
            <person name="Wedler E."/>
            <person name="Wedler H."/>
            <person name="Weitzenegger T."/>
            <person name="Winters P."/>
            <person name="Wipat A."/>
            <person name="Yamamoto H."/>
            <person name="Yamane K."/>
            <person name="Yasumoto K."/>
            <person name="Yata K."/>
            <person name="Yoshida K."/>
            <person name="Yoshikawa H.-F."/>
            <person name="Zumstein E."/>
            <person name="Yoshikawa H."/>
            <person name="Danchin A."/>
        </authorList>
    </citation>
    <scope>NUCLEOTIDE SEQUENCE [LARGE SCALE GENOMIC DNA]</scope>
    <source>
        <strain>168</strain>
    </source>
</reference>
<reference key="5">
    <citation type="journal article" date="1986" name="Nucleic Acids Res.">
        <title>Nucleotide sequence and organization of dnaB gene and neighbouring genes on the Bacillus subtilis chromosome.</title>
        <authorList>
            <person name="Ogasawara N."/>
            <person name="Moriya S."/>
            <person name="Mazza P.G."/>
            <person name="Yoshikawa H."/>
        </authorList>
    </citation>
    <scope>NUCLEOTIDE SEQUENCE [GENOMIC DNA] OF 1-180</scope>
</reference>
<reference key="6">
    <citation type="journal article" date="1992" name="EMBO J.">
        <title>Co-ordinate expression of the two threonyl-tRNA synthetase genes in Bacillus subtilis: control by transcriptional antitermination involving a conserved regulatory sequence.</title>
        <authorList>
            <person name="Putzer H."/>
            <person name="Gendron N."/>
            <person name="Grunberg-Manago M."/>
        </authorList>
    </citation>
    <scope>DEVELOPMENTAL STAGE</scope>
</reference>
<protein>
    <recommendedName>
        <fullName evidence="1">Threonine--tRNA ligase 1</fullName>
        <ecNumber evidence="1">6.1.1.3</ecNumber>
    </recommendedName>
    <alternativeName>
        <fullName evidence="1">Threonyl-tRNA synthetase 1</fullName>
        <shortName evidence="1">ThrRS 1</shortName>
    </alternativeName>
</protein>
<feature type="chain" id="PRO_0000100938" description="Threonine--tRNA ligase 1">
    <location>
        <begin position="1"/>
        <end position="643"/>
    </location>
</feature>
<feature type="domain" description="TGS" evidence="2">
    <location>
        <begin position="3"/>
        <end position="64"/>
    </location>
</feature>
<feature type="region of interest" description="Catalytic" evidence="1">
    <location>
        <begin position="245"/>
        <end position="542"/>
    </location>
</feature>
<feature type="binding site" evidence="1">
    <location>
        <position position="338"/>
    </location>
    <ligand>
        <name>Zn(2+)</name>
        <dbReference type="ChEBI" id="CHEBI:29105"/>
    </ligand>
</feature>
<feature type="binding site" evidence="1">
    <location>
        <position position="389"/>
    </location>
    <ligand>
        <name>Zn(2+)</name>
        <dbReference type="ChEBI" id="CHEBI:29105"/>
    </ligand>
</feature>
<feature type="binding site" evidence="1">
    <location>
        <position position="519"/>
    </location>
    <ligand>
        <name>Zn(2+)</name>
        <dbReference type="ChEBI" id="CHEBI:29105"/>
    </ligand>
</feature>
<sequence>MSDMVKITFPDGAVKEFAKGTTTEDIAASISPGLKKKSLAGKLNGKEIDLRTPINEDGTVEIITEGSEEGLQIMRHSAAHLLAQAIKRIYKDVKFGVGPVIENGFYYDVEMDEAITPEDLPKIEKEMKKIVNANLPIVRKEVSREEAKARFAEIGDDLKLELLDAIPEGETVSIYEQGEFFDLCRGVHVPSTGKIKEFKLLSLAGAYWRGDSKNQMLQRVYGTAFFKKADLEEHLRMLEEAKERDHRKLGKELKLFANSQKVGQGLPLWLPKGATIRRVIERYIVDKEISLGYEHVYTPVLGSKELYETSGHWDHYQEGMFPPMEMDNETLVLRPMNCPHHMMIYKQDIHSYRELPIRIAELGTMHRYEMSGALSGLQRVRGMTLNDAHIFVRPDQIKDEFIRTVRLIQDVYEDFGLSDYTFRLSYRDPEDTEKYFDDDEMWNKAQSMLKEAMDEIGHDYYEAEGEAAFYGPKLDVQVKTAIGKEETLSTVQLDFLLPERFDLTYIGEDGKQHRPVVIHRGVVSTMERFVAFLIEEHKGALPTWLAPVQFQVIPVSPAVHLDYAKKVQERLQCEGLRVEVDSRDEKIGYKIREAQMQKIPYMLVVGDQEAENGAVNVRKYGEQNSETISLDEFVKKAVAEAKK</sequence>